<protein>
    <recommendedName>
        <fullName evidence="1">5-methylthioadenosine/S-adenosylhomocysteine deaminase</fullName>
        <shortName evidence="1">MTA/SAH deaminase</shortName>
        <ecNumber evidence="1">3.5.4.28</ecNumber>
        <ecNumber evidence="1">3.5.4.31</ecNumber>
    </recommendedName>
</protein>
<name>MTAD_SYNFM</name>
<comment type="function">
    <text evidence="1">Catalyzes the deamination of 5-methylthioadenosine and S-adenosyl-L-homocysteine into 5-methylthioinosine and S-inosyl-L-homocysteine, respectively. Is also able to deaminate adenosine.</text>
</comment>
<comment type="catalytic activity">
    <reaction evidence="1">
        <text>S-adenosyl-L-homocysteine + H2O + H(+) = S-inosyl-L-homocysteine + NH4(+)</text>
        <dbReference type="Rhea" id="RHEA:20716"/>
        <dbReference type="ChEBI" id="CHEBI:15377"/>
        <dbReference type="ChEBI" id="CHEBI:15378"/>
        <dbReference type="ChEBI" id="CHEBI:28938"/>
        <dbReference type="ChEBI" id="CHEBI:57856"/>
        <dbReference type="ChEBI" id="CHEBI:57985"/>
        <dbReference type="EC" id="3.5.4.28"/>
    </reaction>
</comment>
<comment type="catalytic activity">
    <reaction evidence="1">
        <text>S-methyl-5'-thioadenosine + H2O + H(+) = S-methyl-5'-thioinosine + NH4(+)</text>
        <dbReference type="Rhea" id="RHEA:25025"/>
        <dbReference type="ChEBI" id="CHEBI:15377"/>
        <dbReference type="ChEBI" id="CHEBI:15378"/>
        <dbReference type="ChEBI" id="CHEBI:17509"/>
        <dbReference type="ChEBI" id="CHEBI:28938"/>
        <dbReference type="ChEBI" id="CHEBI:48595"/>
        <dbReference type="EC" id="3.5.4.31"/>
    </reaction>
</comment>
<comment type="cofactor">
    <cofactor evidence="1">
        <name>Zn(2+)</name>
        <dbReference type="ChEBI" id="CHEBI:29105"/>
    </cofactor>
    <text evidence="1">Binds 1 zinc ion per subunit.</text>
</comment>
<comment type="similarity">
    <text evidence="1">Belongs to the metallo-dependent hydrolases superfamily. MTA/SAH deaminase family.</text>
</comment>
<comment type="sequence caution" evidence="2">
    <conflict type="erroneous initiation">
        <sequence resource="EMBL-CDS" id="ABK18635"/>
    </conflict>
</comment>
<sequence length="438" mass="48014">MGSSRADLLLVNGMVLTLDPDGRRFDPGAVAILNGEIAAVGPAERLAADFRATRTLDVGGCVVLPGLINAHTHAAMTLFRGLADDLPLMEWLQQHIFPAEAKLTEDWVYWGTMLACAEMIRSGTTTFCDMYLFEHKVAEAARAAGMRAVVGEVLYDFPSPHYGPIENGLRFTESLIERWKEDPLIRIAVEPHAPYTCSPSLLTRCNDIALRHRVPLIIHLSENEAEVEQVLSRYGRRPVAHLEEIGLLGPHLVADHCVALDERDLELLGERGVHVVHNPESNMKLASGIAPVPKLLERGVNVALGTDGCASNNNLDLFGEMDTCAKLHKAATLDPTAMPAETVLRMATAGGARALGMGGRIGELSVGRLADLIVVDFRKPHLVPVYNPISHLVYAARSSDVRHAVIHGRLVMEDRRLLTMNVDEVMERVRYIARTIKP</sequence>
<reference key="1">
    <citation type="submission" date="2006-10" db="EMBL/GenBank/DDBJ databases">
        <title>Complete sequence of Syntrophobacter fumaroxidans MPOB.</title>
        <authorList>
            <consortium name="US DOE Joint Genome Institute"/>
            <person name="Copeland A."/>
            <person name="Lucas S."/>
            <person name="Lapidus A."/>
            <person name="Barry K."/>
            <person name="Detter J.C."/>
            <person name="Glavina del Rio T."/>
            <person name="Hammon N."/>
            <person name="Israni S."/>
            <person name="Pitluck S."/>
            <person name="Goltsman E.G."/>
            <person name="Martinez M."/>
            <person name="Schmutz J."/>
            <person name="Larimer F."/>
            <person name="Land M."/>
            <person name="Hauser L."/>
            <person name="Kyrpides N."/>
            <person name="Kim E."/>
            <person name="Boone D.R."/>
            <person name="Brockman F."/>
            <person name="Culley D."/>
            <person name="Ferry J."/>
            <person name="Gunsalus R."/>
            <person name="McInerney M.J."/>
            <person name="Morrison M."/>
            <person name="Plugge C."/>
            <person name="Rohlin L."/>
            <person name="Scholten J."/>
            <person name="Sieber J."/>
            <person name="Stams A.J.M."/>
            <person name="Worm P."/>
            <person name="Henstra A.M."/>
            <person name="Richardson P."/>
        </authorList>
    </citation>
    <scope>NUCLEOTIDE SEQUENCE [LARGE SCALE GENOMIC DNA]</scope>
    <source>
        <strain>DSM 10017 / MPOB</strain>
    </source>
</reference>
<feature type="chain" id="PRO_0000312460" description="5-methylthioadenosine/S-adenosylhomocysteine deaminase">
    <location>
        <begin position="1"/>
        <end position="438"/>
    </location>
</feature>
<feature type="binding site" evidence="1">
    <location>
        <position position="71"/>
    </location>
    <ligand>
        <name>Zn(2+)</name>
        <dbReference type="ChEBI" id="CHEBI:29105"/>
    </ligand>
</feature>
<feature type="binding site" evidence="1">
    <location>
        <position position="73"/>
    </location>
    <ligand>
        <name>Zn(2+)</name>
        <dbReference type="ChEBI" id="CHEBI:29105"/>
    </ligand>
</feature>
<feature type="binding site" evidence="1">
    <location>
        <position position="100"/>
    </location>
    <ligand>
        <name>substrate</name>
    </ligand>
</feature>
<feature type="binding site" evidence="1">
    <location>
        <position position="192"/>
    </location>
    <ligand>
        <name>substrate</name>
    </ligand>
</feature>
<feature type="binding site" evidence="1">
    <location>
        <position position="219"/>
    </location>
    <ligand>
        <name>Zn(2+)</name>
        <dbReference type="ChEBI" id="CHEBI:29105"/>
    </ligand>
</feature>
<feature type="binding site" evidence="1">
    <location>
        <position position="222"/>
    </location>
    <ligand>
        <name>substrate</name>
    </ligand>
</feature>
<feature type="binding site" evidence="1">
    <location>
        <position position="307"/>
    </location>
    <ligand>
        <name>substrate</name>
    </ligand>
</feature>
<feature type="binding site" evidence="1">
    <location>
        <position position="307"/>
    </location>
    <ligand>
        <name>Zn(2+)</name>
        <dbReference type="ChEBI" id="CHEBI:29105"/>
    </ligand>
</feature>
<keyword id="KW-0378">Hydrolase</keyword>
<keyword id="KW-0479">Metal-binding</keyword>
<keyword id="KW-1185">Reference proteome</keyword>
<keyword id="KW-0862">Zinc</keyword>
<evidence type="ECO:0000255" key="1">
    <source>
        <dbReference type="HAMAP-Rule" id="MF_01281"/>
    </source>
</evidence>
<evidence type="ECO:0000305" key="2"/>
<organism>
    <name type="scientific">Syntrophobacter fumaroxidans (strain DSM 10017 / MPOB)</name>
    <dbReference type="NCBI Taxonomy" id="335543"/>
    <lineage>
        <taxon>Bacteria</taxon>
        <taxon>Pseudomonadati</taxon>
        <taxon>Thermodesulfobacteriota</taxon>
        <taxon>Syntrophobacteria</taxon>
        <taxon>Syntrophobacterales</taxon>
        <taxon>Syntrophobacteraceae</taxon>
        <taxon>Syntrophobacter</taxon>
    </lineage>
</organism>
<proteinExistence type="inferred from homology"/>
<gene>
    <name evidence="1" type="primary">mtaD</name>
    <name type="ordered locus">Sfum_2961</name>
</gene>
<dbReference type="EC" id="3.5.4.28" evidence="1"/>
<dbReference type="EC" id="3.5.4.31" evidence="1"/>
<dbReference type="EMBL" id="CP000478">
    <property type="protein sequence ID" value="ABK18635.1"/>
    <property type="status" value="ALT_INIT"/>
    <property type="molecule type" value="Genomic_DNA"/>
</dbReference>
<dbReference type="SMR" id="A0LMI3"/>
<dbReference type="FunCoup" id="A0LMI3">
    <property type="interactions" value="372"/>
</dbReference>
<dbReference type="STRING" id="335543.Sfum_2961"/>
<dbReference type="KEGG" id="sfu:Sfum_2961"/>
<dbReference type="eggNOG" id="COG0402">
    <property type="taxonomic scope" value="Bacteria"/>
</dbReference>
<dbReference type="HOGENOM" id="CLU_012358_2_1_7"/>
<dbReference type="InParanoid" id="A0LMI3"/>
<dbReference type="OrthoDB" id="9807210at2"/>
<dbReference type="Proteomes" id="UP000001784">
    <property type="component" value="Chromosome"/>
</dbReference>
<dbReference type="GO" id="GO:0090614">
    <property type="term" value="F:5'-methylthioadenosine deaminase activity"/>
    <property type="evidence" value="ECO:0007669"/>
    <property type="project" value="UniProtKB-UniRule"/>
</dbReference>
<dbReference type="GO" id="GO:0046872">
    <property type="term" value="F:metal ion binding"/>
    <property type="evidence" value="ECO:0007669"/>
    <property type="project" value="UniProtKB-KW"/>
</dbReference>
<dbReference type="GO" id="GO:0050270">
    <property type="term" value="F:S-adenosylhomocysteine deaminase activity"/>
    <property type="evidence" value="ECO:0007669"/>
    <property type="project" value="UniProtKB-UniRule"/>
</dbReference>
<dbReference type="CDD" id="cd01298">
    <property type="entry name" value="ATZ_TRZ_like"/>
    <property type="match status" value="1"/>
</dbReference>
<dbReference type="FunFam" id="3.20.20.140:FF:000014">
    <property type="entry name" value="5-methylthioadenosine/S-adenosylhomocysteine deaminase"/>
    <property type="match status" value="1"/>
</dbReference>
<dbReference type="Gene3D" id="3.20.20.140">
    <property type="entry name" value="Metal-dependent hydrolases"/>
    <property type="match status" value="1"/>
</dbReference>
<dbReference type="Gene3D" id="2.30.40.10">
    <property type="entry name" value="Urease, subunit C, domain 1"/>
    <property type="match status" value="1"/>
</dbReference>
<dbReference type="HAMAP" id="MF_01281">
    <property type="entry name" value="MTA_SAH_deamin"/>
    <property type="match status" value="1"/>
</dbReference>
<dbReference type="InterPro" id="IPR006680">
    <property type="entry name" value="Amidohydro-rel"/>
</dbReference>
<dbReference type="InterPro" id="IPR023512">
    <property type="entry name" value="Deaminase_MtaD/DadD"/>
</dbReference>
<dbReference type="InterPro" id="IPR011059">
    <property type="entry name" value="Metal-dep_hydrolase_composite"/>
</dbReference>
<dbReference type="InterPro" id="IPR032466">
    <property type="entry name" value="Metal_Hydrolase"/>
</dbReference>
<dbReference type="InterPro" id="IPR050287">
    <property type="entry name" value="MTA/SAH_deaminase"/>
</dbReference>
<dbReference type="PANTHER" id="PTHR43794:SF11">
    <property type="entry name" value="AMIDOHYDROLASE-RELATED DOMAIN-CONTAINING PROTEIN"/>
    <property type="match status" value="1"/>
</dbReference>
<dbReference type="PANTHER" id="PTHR43794">
    <property type="entry name" value="AMINOHYDROLASE SSNA-RELATED"/>
    <property type="match status" value="1"/>
</dbReference>
<dbReference type="Pfam" id="PF01979">
    <property type="entry name" value="Amidohydro_1"/>
    <property type="match status" value="1"/>
</dbReference>
<dbReference type="SUPFAM" id="SSF51338">
    <property type="entry name" value="Composite domain of metallo-dependent hydrolases"/>
    <property type="match status" value="1"/>
</dbReference>
<dbReference type="SUPFAM" id="SSF51556">
    <property type="entry name" value="Metallo-dependent hydrolases"/>
    <property type="match status" value="1"/>
</dbReference>
<accession>A0LMI3</accession>